<dbReference type="EC" id="7.4.2.8" evidence="1"/>
<dbReference type="EMBL" id="CP000388">
    <property type="protein sequence ID" value="ABG42013.1"/>
    <property type="molecule type" value="Genomic_DNA"/>
</dbReference>
<dbReference type="RefSeq" id="WP_011576241.1">
    <property type="nucleotide sequence ID" value="NC_008228.1"/>
</dbReference>
<dbReference type="SMR" id="Q15Q25"/>
<dbReference type="STRING" id="342610.Patl_3511"/>
<dbReference type="KEGG" id="pat:Patl_3511"/>
<dbReference type="eggNOG" id="COG0653">
    <property type="taxonomic scope" value="Bacteria"/>
</dbReference>
<dbReference type="HOGENOM" id="CLU_005314_3_0_6"/>
<dbReference type="OrthoDB" id="9805579at2"/>
<dbReference type="Proteomes" id="UP000001981">
    <property type="component" value="Chromosome"/>
</dbReference>
<dbReference type="GO" id="GO:0031522">
    <property type="term" value="C:cell envelope Sec protein transport complex"/>
    <property type="evidence" value="ECO:0007669"/>
    <property type="project" value="TreeGrafter"/>
</dbReference>
<dbReference type="GO" id="GO:0005829">
    <property type="term" value="C:cytosol"/>
    <property type="evidence" value="ECO:0007669"/>
    <property type="project" value="TreeGrafter"/>
</dbReference>
<dbReference type="GO" id="GO:0005886">
    <property type="term" value="C:plasma membrane"/>
    <property type="evidence" value="ECO:0007669"/>
    <property type="project" value="UniProtKB-SubCell"/>
</dbReference>
<dbReference type="GO" id="GO:0005524">
    <property type="term" value="F:ATP binding"/>
    <property type="evidence" value="ECO:0007669"/>
    <property type="project" value="UniProtKB-UniRule"/>
</dbReference>
<dbReference type="GO" id="GO:0046872">
    <property type="term" value="F:metal ion binding"/>
    <property type="evidence" value="ECO:0007669"/>
    <property type="project" value="UniProtKB-KW"/>
</dbReference>
<dbReference type="GO" id="GO:0008564">
    <property type="term" value="F:protein-exporting ATPase activity"/>
    <property type="evidence" value="ECO:0007669"/>
    <property type="project" value="UniProtKB-EC"/>
</dbReference>
<dbReference type="GO" id="GO:0065002">
    <property type="term" value="P:intracellular protein transmembrane transport"/>
    <property type="evidence" value="ECO:0007669"/>
    <property type="project" value="UniProtKB-UniRule"/>
</dbReference>
<dbReference type="GO" id="GO:0017038">
    <property type="term" value="P:protein import"/>
    <property type="evidence" value="ECO:0007669"/>
    <property type="project" value="InterPro"/>
</dbReference>
<dbReference type="GO" id="GO:0006605">
    <property type="term" value="P:protein targeting"/>
    <property type="evidence" value="ECO:0007669"/>
    <property type="project" value="UniProtKB-UniRule"/>
</dbReference>
<dbReference type="GO" id="GO:0043952">
    <property type="term" value="P:protein transport by the Sec complex"/>
    <property type="evidence" value="ECO:0007669"/>
    <property type="project" value="TreeGrafter"/>
</dbReference>
<dbReference type="CDD" id="cd17928">
    <property type="entry name" value="DEXDc_SecA"/>
    <property type="match status" value="1"/>
</dbReference>
<dbReference type="CDD" id="cd18803">
    <property type="entry name" value="SF2_C_secA"/>
    <property type="match status" value="1"/>
</dbReference>
<dbReference type="FunFam" id="3.40.50.300:FF:000113">
    <property type="entry name" value="Preprotein translocase subunit SecA"/>
    <property type="match status" value="1"/>
</dbReference>
<dbReference type="FunFam" id="3.90.1440.10:FF:000001">
    <property type="entry name" value="Preprotein translocase subunit SecA"/>
    <property type="match status" value="1"/>
</dbReference>
<dbReference type="FunFam" id="1.10.3060.10:FF:000003">
    <property type="entry name" value="Protein translocase subunit SecA"/>
    <property type="match status" value="1"/>
</dbReference>
<dbReference type="Gene3D" id="1.10.3060.10">
    <property type="entry name" value="Helical scaffold and wing domains of SecA"/>
    <property type="match status" value="1"/>
</dbReference>
<dbReference type="Gene3D" id="3.40.50.300">
    <property type="entry name" value="P-loop containing nucleotide triphosphate hydrolases"/>
    <property type="match status" value="2"/>
</dbReference>
<dbReference type="Gene3D" id="3.90.1440.10">
    <property type="entry name" value="SecA, preprotein cross-linking domain"/>
    <property type="match status" value="1"/>
</dbReference>
<dbReference type="HAMAP" id="MF_01382">
    <property type="entry name" value="SecA"/>
    <property type="match status" value="1"/>
</dbReference>
<dbReference type="InterPro" id="IPR014001">
    <property type="entry name" value="Helicase_ATP-bd"/>
</dbReference>
<dbReference type="InterPro" id="IPR027417">
    <property type="entry name" value="P-loop_NTPase"/>
</dbReference>
<dbReference type="InterPro" id="IPR004027">
    <property type="entry name" value="SEC_C_motif"/>
</dbReference>
<dbReference type="InterPro" id="IPR000185">
    <property type="entry name" value="SecA"/>
</dbReference>
<dbReference type="InterPro" id="IPR020937">
    <property type="entry name" value="SecA_CS"/>
</dbReference>
<dbReference type="InterPro" id="IPR011115">
    <property type="entry name" value="SecA_DEAD"/>
</dbReference>
<dbReference type="InterPro" id="IPR014018">
    <property type="entry name" value="SecA_motor_DEAD"/>
</dbReference>
<dbReference type="InterPro" id="IPR011130">
    <property type="entry name" value="SecA_preprotein_X-link_dom"/>
</dbReference>
<dbReference type="InterPro" id="IPR044722">
    <property type="entry name" value="SecA_SF2_C"/>
</dbReference>
<dbReference type="InterPro" id="IPR011116">
    <property type="entry name" value="SecA_Wing/Scaffold"/>
</dbReference>
<dbReference type="InterPro" id="IPR036266">
    <property type="entry name" value="SecA_Wing/Scaffold_sf"/>
</dbReference>
<dbReference type="InterPro" id="IPR036670">
    <property type="entry name" value="SecA_X-link_sf"/>
</dbReference>
<dbReference type="NCBIfam" id="NF009538">
    <property type="entry name" value="PRK12904.1"/>
    <property type="match status" value="1"/>
</dbReference>
<dbReference type="NCBIfam" id="TIGR00963">
    <property type="entry name" value="secA"/>
    <property type="match status" value="1"/>
</dbReference>
<dbReference type="PANTHER" id="PTHR30612:SF0">
    <property type="entry name" value="CHLOROPLAST PROTEIN-TRANSPORTING ATPASE"/>
    <property type="match status" value="1"/>
</dbReference>
<dbReference type="PANTHER" id="PTHR30612">
    <property type="entry name" value="SECA INNER MEMBRANE COMPONENT OF SEC PROTEIN SECRETION SYSTEM"/>
    <property type="match status" value="1"/>
</dbReference>
<dbReference type="Pfam" id="PF21090">
    <property type="entry name" value="P-loop_SecA"/>
    <property type="match status" value="1"/>
</dbReference>
<dbReference type="Pfam" id="PF02810">
    <property type="entry name" value="SEC-C"/>
    <property type="match status" value="1"/>
</dbReference>
<dbReference type="Pfam" id="PF07517">
    <property type="entry name" value="SecA_DEAD"/>
    <property type="match status" value="1"/>
</dbReference>
<dbReference type="Pfam" id="PF01043">
    <property type="entry name" value="SecA_PP_bind"/>
    <property type="match status" value="1"/>
</dbReference>
<dbReference type="Pfam" id="PF07516">
    <property type="entry name" value="SecA_SW"/>
    <property type="match status" value="1"/>
</dbReference>
<dbReference type="PRINTS" id="PR00906">
    <property type="entry name" value="SECA"/>
</dbReference>
<dbReference type="SMART" id="SM00957">
    <property type="entry name" value="SecA_DEAD"/>
    <property type="match status" value="1"/>
</dbReference>
<dbReference type="SMART" id="SM00958">
    <property type="entry name" value="SecA_PP_bind"/>
    <property type="match status" value="1"/>
</dbReference>
<dbReference type="SUPFAM" id="SSF81886">
    <property type="entry name" value="Helical scaffold and wing domains of SecA"/>
    <property type="match status" value="1"/>
</dbReference>
<dbReference type="SUPFAM" id="SSF52540">
    <property type="entry name" value="P-loop containing nucleoside triphosphate hydrolases"/>
    <property type="match status" value="2"/>
</dbReference>
<dbReference type="SUPFAM" id="SSF81767">
    <property type="entry name" value="Pre-protein crosslinking domain of SecA"/>
    <property type="match status" value="1"/>
</dbReference>
<dbReference type="PROSITE" id="PS01312">
    <property type="entry name" value="SECA"/>
    <property type="match status" value="1"/>
</dbReference>
<dbReference type="PROSITE" id="PS51196">
    <property type="entry name" value="SECA_MOTOR_DEAD"/>
    <property type="match status" value="1"/>
</dbReference>
<keyword id="KW-0067">ATP-binding</keyword>
<keyword id="KW-0997">Cell inner membrane</keyword>
<keyword id="KW-1003">Cell membrane</keyword>
<keyword id="KW-0963">Cytoplasm</keyword>
<keyword id="KW-0472">Membrane</keyword>
<keyword id="KW-0479">Metal-binding</keyword>
<keyword id="KW-0547">Nucleotide-binding</keyword>
<keyword id="KW-0653">Protein transport</keyword>
<keyword id="KW-1278">Translocase</keyword>
<keyword id="KW-0811">Translocation</keyword>
<keyword id="KW-0813">Transport</keyword>
<keyword id="KW-0862">Zinc</keyword>
<reference key="1">
    <citation type="submission" date="2006-06" db="EMBL/GenBank/DDBJ databases">
        <title>Complete sequence of Pseudoalteromonas atlantica T6c.</title>
        <authorList>
            <consortium name="US DOE Joint Genome Institute"/>
            <person name="Copeland A."/>
            <person name="Lucas S."/>
            <person name="Lapidus A."/>
            <person name="Barry K."/>
            <person name="Detter J.C."/>
            <person name="Glavina del Rio T."/>
            <person name="Hammon N."/>
            <person name="Israni S."/>
            <person name="Dalin E."/>
            <person name="Tice H."/>
            <person name="Pitluck S."/>
            <person name="Saunders E."/>
            <person name="Brettin T."/>
            <person name="Bruce D."/>
            <person name="Han C."/>
            <person name="Tapia R."/>
            <person name="Gilna P."/>
            <person name="Schmutz J."/>
            <person name="Larimer F."/>
            <person name="Land M."/>
            <person name="Hauser L."/>
            <person name="Kyrpides N."/>
            <person name="Kim E."/>
            <person name="Karls A.C."/>
            <person name="Bartlett D."/>
            <person name="Higgins B.P."/>
            <person name="Richardson P."/>
        </authorList>
    </citation>
    <scope>NUCLEOTIDE SEQUENCE [LARGE SCALE GENOMIC DNA]</scope>
    <source>
        <strain>T6c / ATCC BAA-1087</strain>
    </source>
</reference>
<proteinExistence type="inferred from homology"/>
<accession>Q15Q25</accession>
<feature type="chain" id="PRO_0000320892" description="Protein translocase subunit SecA">
    <location>
        <begin position="1"/>
        <end position="909"/>
    </location>
</feature>
<feature type="region of interest" description="Disordered" evidence="2">
    <location>
        <begin position="246"/>
        <end position="265"/>
    </location>
</feature>
<feature type="region of interest" description="Disordered" evidence="2">
    <location>
        <begin position="834"/>
        <end position="899"/>
    </location>
</feature>
<feature type="compositionally biased region" description="Basic and acidic residues" evidence="2">
    <location>
        <begin position="254"/>
        <end position="265"/>
    </location>
</feature>
<feature type="compositionally biased region" description="Basic and acidic residues" evidence="2">
    <location>
        <begin position="834"/>
        <end position="858"/>
    </location>
</feature>
<feature type="compositionally biased region" description="Low complexity" evidence="2">
    <location>
        <begin position="859"/>
        <end position="875"/>
    </location>
</feature>
<feature type="binding site" evidence="1">
    <location>
        <position position="87"/>
    </location>
    <ligand>
        <name>ATP</name>
        <dbReference type="ChEBI" id="CHEBI:30616"/>
    </ligand>
</feature>
<feature type="binding site" evidence="1">
    <location>
        <begin position="105"/>
        <end position="109"/>
    </location>
    <ligand>
        <name>ATP</name>
        <dbReference type="ChEBI" id="CHEBI:30616"/>
    </ligand>
</feature>
<feature type="binding site" evidence="1">
    <location>
        <position position="512"/>
    </location>
    <ligand>
        <name>ATP</name>
        <dbReference type="ChEBI" id="CHEBI:30616"/>
    </ligand>
</feature>
<feature type="binding site" evidence="1">
    <location>
        <position position="893"/>
    </location>
    <ligand>
        <name>Zn(2+)</name>
        <dbReference type="ChEBI" id="CHEBI:29105"/>
    </ligand>
</feature>
<feature type="binding site" evidence="1">
    <location>
        <position position="895"/>
    </location>
    <ligand>
        <name>Zn(2+)</name>
        <dbReference type="ChEBI" id="CHEBI:29105"/>
    </ligand>
</feature>
<feature type="binding site" evidence="1">
    <location>
        <position position="904"/>
    </location>
    <ligand>
        <name>Zn(2+)</name>
        <dbReference type="ChEBI" id="CHEBI:29105"/>
    </ligand>
</feature>
<feature type="binding site" evidence="1">
    <location>
        <position position="905"/>
    </location>
    <ligand>
        <name>Zn(2+)</name>
        <dbReference type="ChEBI" id="CHEBI:29105"/>
    </ligand>
</feature>
<gene>
    <name evidence="1" type="primary">secA</name>
    <name type="ordered locus">Patl_3511</name>
</gene>
<evidence type="ECO:0000255" key="1">
    <source>
        <dbReference type="HAMAP-Rule" id="MF_01382"/>
    </source>
</evidence>
<evidence type="ECO:0000256" key="2">
    <source>
        <dbReference type="SAM" id="MobiDB-lite"/>
    </source>
</evidence>
<sequence>MFSSILTKVFGSRNDRTLKKLNKITEQVNQLEAQYEALSDEQLKAKTGEFQKRLQDGEDTDNLLPEAFAVVREASKRVFSMRHFDVQMLGGQVLHTGQIAEMRTGEGKTLTSTLPAYLNALSGKGVHVITVNDYLASRDAEGSRPLFEFLGLSVGCNIPGMNHAQKKEAYAADITYGTNNEFGFDYLRDNMAFSPGDRVQRELHYAIIDEVDSILIDEARTPLIISGQAEDSSELYRKINAIIPQLEQQEKEDEEGKNGDGDYTIDEKGKQVHLTEKGQIHVEEILKTSGILGEDESLFAAANISLLHHVNAALRAHKLFSRDVDYIVKGDDVVIVDEHTGRTMEGRRWSEGLHQAVEAKEGVNIQNENQTLASITFQNYFRLYDKLAGMTGTADTEAFEFQSIYGLDTVVIPTNKPMVRKDKADLIYLTAQEKYEAIVEDIKDCVKRGQPTLVGTVSIENSELISNILKKAKIPHKVLNAKFHEQEADIVAQAGKPGAVTIATNMAGRGTDIVLGGNWQVAVDGINDPKPGTVEKIKEQWQKDHDAVIEAGGLHIIGTERHESRRIDNQLRGRSGRQGDAGSSRFYLSLDDALMRIFASEKMGNMMKRLGMERGEAIEHPWVTRAIENAQRKVEGRNFDMRKQLLEFDDVANDQRKVIYEQRNELLDEGDIYSTIEAIRIDVVDSIISQYIPPQSLSEMWNVSGLEEHFKSEFLLDIPLQKWIDEDDKLYEEKIRERILEEVNNAYKAKEDIVGPDVLRQFEKAVMLQNLDSHWKEHLAAMDHLRQGIHLRGYAQKNPKQEYKRESFELFTEMLEALKVEVVTVLSKVQVKAESDVEAVEEQRRQADEQPKQYEHETASATQAPEQAPEAAPAARPGNALRDGPKVGRNDPCPCGSGLKYKQCHGKLS</sequence>
<comment type="function">
    <text evidence="1">Part of the Sec protein translocase complex. Interacts with the SecYEG preprotein conducting channel. Has a central role in coupling the hydrolysis of ATP to the transfer of proteins into and across the cell membrane, serving both as a receptor for the preprotein-SecB complex and as an ATP-driven molecular motor driving the stepwise translocation of polypeptide chains across the membrane.</text>
</comment>
<comment type="catalytic activity">
    <reaction evidence="1">
        <text>ATP + H2O + cellular proteinSide 1 = ADP + phosphate + cellular proteinSide 2.</text>
        <dbReference type="EC" id="7.4.2.8"/>
    </reaction>
</comment>
<comment type="cofactor">
    <cofactor evidence="1">
        <name>Zn(2+)</name>
        <dbReference type="ChEBI" id="CHEBI:29105"/>
    </cofactor>
    <text evidence="1">May bind 1 zinc ion per subunit.</text>
</comment>
<comment type="subunit">
    <text evidence="1">Monomer and homodimer. Part of the essential Sec protein translocation apparatus which comprises SecA, SecYEG and auxiliary proteins SecDF-YajC and YidC.</text>
</comment>
<comment type="subcellular location">
    <subcellularLocation>
        <location evidence="1">Cell inner membrane</location>
        <topology evidence="1">Peripheral membrane protein</topology>
        <orientation evidence="1">Cytoplasmic side</orientation>
    </subcellularLocation>
    <subcellularLocation>
        <location evidence="1">Cytoplasm</location>
    </subcellularLocation>
    <text evidence="1">Distribution is 50-50.</text>
</comment>
<comment type="similarity">
    <text evidence="1">Belongs to the SecA family.</text>
</comment>
<name>SECA_PSEA6</name>
<protein>
    <recommendedName>
        <fullName evidence="1">Protein translocase subunit SecA</fullName>
        <ecNumber evidence="1">7.4.2.8</ecNumber>
    </recommendedName>
</protein>
<organism>
    <name type="scientific">Pseudoalteromonas atlantica (strain T6c / ATCC BAA-1087)</name>
    <dbReference type="NCBI Taxonomy" id="3042615"/>
    <lineage>
        <taxon>Bacteria</taxon>
        <taxon>Pseudomonadati</taxon>
        <taxon>Pseudomonadota</taxon>
        <taxon>Gammaproteobacteria</taxon>
        <taxon>Alteromonadales</taxon>
        <taxon>Alteromonadaceae</taxon>
        <taxon>Paraglaciecola</taxon>
    </lineage>
</organism>